<proteinExistence type="inferred from homology"/>
<name>SYM_BUCA5</name>
<dbReference type="EC" id="6.1.1.10" evidence="1"/>
<dbReference type="EMBL" id="CP001161">
    <property type="protein sequence ID" value="ACL30483.1"/>
    <property type="molecule type" value="Genomic_DNA"/>
</dbReference>
<dbReference type="RefSeq" id="WP_009874064.1">
    <property type="nucleotide sequence ID" value="NC_011833.1"/>
</dbReference>
<dbReference type="SMR" id="B8D8R1"/>
<dbReference type="KEGG" id="bap:BUAP5A_107"/>
<dbReference type="HOGENOM" id="CLU_009710_7_0_6"/>
<dbReference type="OrthoDB" id="9810191at2"/>
<dbReference type="Proteomes" id="UP000006904">
    <property type="component" value="Chromosome"/>
</dbReference>
<dbReference type="GO" id="GO:0005829">
    <property type="term" value="C:cytosol"/>
    <property type="evidence" value="ECO:0007669"/>
    <property type="project" value="TreeGrafter"/>
</dbReference>
<dbReference type="GO" id="GO:0005524">
    <property type="term" value="F:ATP binding"/>
    <property type="evidence" value="ECO:0007669"/>
    <property type="project" value="UniProtKB-UniRule"/>
</dbReference>
<dbReference type="GO" id="GO:0046872">
    <property type="term" value="F:metal ion binding"/>
    <property type="evidence" value="ECO:0007669"/>
    <property type="project" value="UniProtKB-KW"/>
</dbReference>
<dbReference type="GO" id="GO:0004825">
    <property type="term" value="F:methionine-tRNA ligase activity"/>
    <property type="evidence" value="ECO:0007669"/>
    <property type="project" value="UniProtKB-UniRule"/>
</dbReference>
<dbReference type="GO" id="GO:0006431">
    <property type="term" value="P:methionyl-tRNA aminoacylation"/>
    <property type="evidence" value="ECO:0007669"/>
    <property type="project" value="UniProtKB-UniRule"/>
</dbReference>
<dbReference type="CDD" id="cd07957">
    <property type="entry name" value="Anticodon_Ia_Met"/>
    <property type="match status" value="1"/>
</dbReference>
<dbReference type="FunFam" id="1.10.730.10:FF:000005">
    <property type="entry name" value="Methionine--tRNA ligase"/>
    <property type="match status" value="1"/>
</dbReference>
<dbReference type="FunFam" id="2.20.28.20:FF:000001">
    <property type="entry name" value="Methionine--tRNA ligase"/>
    <property type="match status" value="1"/>
</dbReference>
<dbReference type="Gene3D" id="3.40.50.620">
    <property type="entry name" value="HUPs"/>
    <property type="match status" value="1"/>
</dbReference>
<dbReference type="Gene3D" id="1.10.730.10">
    <property type="entry name" value="Isoleucyl-tRNA Synthetase, Domain 1"/>
    <property type="match status" value="1"/>
</dbReference>
<dbReference type="Gene3D" id="2.20.28.20">
    <property type="entry name" value="Methionyl-tRNA synthetase, Zn-domain"/>
    <property type="match status" value="1"/>
</dbReference>
<dbReference type="HAMAP" id="MF_00098">
    <property type="entry name" value="Met_tRNA_synth_type1"/>
    <property type="match status" value="1"/>
</dbReference>
<dbReference type="InterPro" id="IPR001412">
    <property type="entry name" value="aa-tRNA-synth_I_CS"/>
</dbReference>
<dbReference type="InterPro" id="IPR041872">
    <property type="entry name" value="Anticodon_Met"/>
</dbReference>
<dbReference type="InterPro" id="IPR023458">
    <property type="entry name" value="Met-tRNA_ligase_1"/>
</dbReference>
<dbReference type="InterPro" id="IPR014758">
    <property type="entry name" value="Met-tRNA_synth"/>
</dbReference>
<dbReference type="InterPro" id="IPR015413">
    <property type="entry name" value="Methionyl/Leucyl_tRNA_Synth"/>
</dbReference>
<dbReference type="InterPro" id="IPR033911">
    <property type="entry name" value="MetRS_core"/>
</dbReference>
<dbReference type="InterPro" id="IPR029038">
    <property type="entry name" value="MetRS_Zn"/>
</dbReference>
<dbReference type="InterPro" id="IPR014729">
    <property type="entry name" value="Rossmann-like_a/b/a_fold"/>
</dbReference>
<dbReference type="InterPro" id="IPR009080">
    <property type="entry name" value="tRNAsynth_Ia_anticodon-bd"/>
</dbReference>
<dbReference type="NCBIfam" id="TIGR00398">
    <property type="entry name" value="metG"/>
    <property type="match status" value="1"/>
</dbReference>
<dbReference type="NCBIfam" id="NF001100">
    <property type="entry name" value="PRK00133.1"/>
    <property type="match status" value="1"/>
</dbReference>
<dbReference type="PANTHER" id="PTHR45765">
    <property type="entry name" value="METHIONINE--TRNA LIGASE"/>
    <property type="match status" value="1"/>
</dbReference>
<dbReference type="PANTHER" id="PTHR45765:SF1">
    <property type="entry name" value="METHIONINE--TRNA LIGASE, CYTOPLASMIC"/>
    <property type="match status" value="1"/>
</dbReference>
<dbReference type="Pfam" id="PF09334">
    <property type="entry name" value="tRNA-synt_1g"/>
    <property type="match status" value="1"/>
</dbReference>
<dbReference type="PRINTS" id="PR01041">
    <property type="entry name" value="TRNASYNTHMET"/>
</dbReference>
<dbReference type="SUPFAM" id="SSF47323">
    <property type="entry name" value="Anticodon-binding domain of a subclass of class I aminoacyl-tRNA synthetases"/>
    <property type="match status" value="1"/>
</dbReference>
<dbReference type="SUPFAM" id="SSF57770">
    <property type="entry name" value="Methionyl-tRNA synthetase (MetRS), Zn-domain"/>
    <property type="match status" value="1"/>
</dbReference>
<dbReference type="SUPFAM" id="SSF52374">
    <property type="entry name" value="Nucleotidylyl transferase"/>
    <property type="match status" value="1"/>
</dbReference>
<dbReference type="PROSITE" id="PS00178">
    <property type="entry name" value="AA_TRNA_LIGASE_I"/>
    <property type="match status" value="1"/>
</dbReference>
<keyword id="KW-0030">Aminoacyl-tRNA synthetase</keyword>
<keyword id="KW-0067">ATP-binding</keyword>
<keyword id="KW-0963">Cytoplasm</keyword>
<keyword id="KW-0436">Ligase</keyword>
<keyword id="KW-0479">Metal-binding</keyword>
<keyword id="KW-0547">Nucleotide-binding</keyword>
<keyword id="KW-0648">Protein biosynthesis</keyword>
<keyword id="KW-0862">Zinc</keyword>
<protein>
    <recommendedName>
        <fullName evidence="1">Methionine--tRNA ligase</fullName>
        <ecNumber evidence="1">6.1.1.10</ecNumber>
    </recommendedName>
    <alternativeName>
        <fullName evidence="1">Methionyl-tRNA synthetase</fullName>
        <shortName evidence="1">MetRS</shortName>
    </alternativeName>
</protein>
<reference key="1">
    <citation type="journal article" date="2009" name="Science">
        <title>The dynamics and time scale of ongoing genomic erosion in symbiotic bacteria.</title>
        <authorList>
            <person name="Moran N.A."/>
            <person name="McLaughlin H.J."/>
            <person name="Sorek R."/>
        </authorList>
    </citation>
    <scope>NUCLEOTIDE SEQUENCE [LARGE SCALE GENOMIC DNA]</scope>
    <source>
        <strain>5A</strain>
    </source>
</reference>
<accession>B8D8R1</accession>
<sequence length="547" mass="64283">MSSVFRKILVTCALPYANGSIHIGHMLEHIQADIWVRYHRMRGHEVWFVSADDAHGTAIMLKAQDLEISPNKLIKNIRIEHQIDFSNFKISHDNYYSTHSLENLYLSRKIFTCLNEKGLIKEKKIFQLYDTVKKIFLPDRFIKGTCPICKSKNQYGDNCEICSATYEPTDLINPISVISGKKPILKNTKHLYFDLPSFTNMLKKWIHSGVLEESVIKKTEEWFKVGLKSWAISRDAPYFGFKIPNYPNKYFYVWLDAPIGYISAFKNLCFKSKKLNFNELWNQNSNYELYHFIGKDIIYFHTLFWPAILEAVSFRQPSGIFVHGHLTMNGLKLSKSRGALIKASDWIQYFDSDSLRYYYASKLSNKTHDIEINLEDFIQKINSDIVNKLVNLAARNASFINKYFNGYLSDKLSNIKLYKYFVNTSSSIEDFFENREFSFIVKESMRLLDVANQYINEKKPWKIKRTEENIRELQNICTMGINLFRIIMIFLKPIVPDLAIKTESFLISKLTWDGIKKPLLSHQINKFFPLYKRIDVEKMFEFMNICR</sequence>
<gene>
    <name evidence="1" type="primary">metG</name>
    <name type="ordered locus">BUAP5A_107</name>
</gene>
<comment type="function">
    <text evidence="1">Is required not only for elongation of protein synthesis but also for the initiation of all mRNA translation through initiator tRNA(fMet) aminoacylation.</text>
</comment>
<comment type="catalytic activity">
    <reaction evidence="1">
        <text>tRNA(Met) + L-methionine + ATP = L-methionyl-tRNA(Met) + AMP + diphosphate</text>
        <dbReference type="Rhea" id="RHEA:13481"/>
        <dbReference type="Rhea" id="RHEA-COMP:9667"/>
        <dbReference type="Rhea" id="RHEA-COMP:9698"/>
        <dbReference type="ChEBI" id="CHEBI:30616"/>
        <dbReference type="ChEBI" id="CHEBI:33019"/>
        <dbReference type="ChEBI" id="CHEBI:57844"/>
        <dbReference type="ChEBI" id="CHEBI:78442"/>
        <dbReference type="ChEBI" id="CHEBI:78530"/>
        <dbReference type="ChEBI" id="CHEBI:456215"/>
        <dbReference type="EC" id="6.1.1.10"/>
    </reaction>
</comment>
<comment type="cofactor">
    <cofactor evidence="1">
        <name>Zn(2+)</name>
        <dbReference type="ChEBI" id="CHEBI:29105"/>
    </cofactor>
    <text evidence="1">Binds 1 zinc ion per subunit.</text>
</comment>
<comment type="subunit">
    <text evidence="1">Monomer.</text>
</comment>
<comment type="subcellular location">
    <subcellularLocation>
        <location evidence="1">Cytoplasm</location>
    </subcellularLocation>
</comment>
<comment type="similarity">
    <text evidence="1">Belongs to the class-I aminoacyl-tRNA synthetase family. MetG type 1 subfamily.</text>
</comment>
<feature type="chain" id="PRO_1000199282" description="Methionine--tRNA ligase">
    <location>
        <begin position="1"/>
        <end position="547"/>
    </location>
</feature>
<feature type="short sequence motif" description="'HIGH' region">
    <location>
        <begin position="15"/>
        <end position="25"/>
    </location>
</feature>
<feature type="short sequence motif" description="'KMSKS' region">
    <location>
        <begin position="332"/>
        <end position="336"/>
    </location>
</feature>
<feature type="binding site" evidence="1">
    <location>
        <position position="146"/>
    </location>
    <ligand>
        <name>Zn(2+)</name>
        <dbReference type="ChEBI" id="CHEBI:29105"/>
    </ligand>
</feature>
<feature type="binding site" evidence="1">
    <location>
        <position position="149"/>
    </location>
    <ligand>
        <name>Zn(2+)</name>
        <dbReference type="ChEBI" id="CHEBI:29105"/>
    </ligand>
</feature>
<feature type="binding site" evidence="1">
    <location>
        <position position="159"/>
    </location>
    <ligand>
        <name>Zn(2+)</name>
        <dbReference type="ChEBI" id="CHEBI:29105"/>
    </ligand>
</feature>
<feature type="binding site" evidence="1">
    <location>
        <position position="162"/>
    </location>
    <ligand>
        <name>Zn(2+)</name>
        <dbReference type="ChEBI" id="CHEBI:29105"/>
    </ligand>
</feature>
<feature type="binding site" evidence="1">
    <location>
        <position position="335"/>
    </location>
    <ligand>
        <name>ATP</name>
        <dbReference type="ChEBI" id="CHEBI:30616"/>
    </ligand>
</feature>
<evidence type="ECO:0000255" key="1">
    <source>
        <dbReference type="HAMAP-Rule" id="MF_00098"/>
    </source>
</evidence>
<organism>
    <name type="scientific">Buchnera aphidicola subsp. Acyrthosiphon pisum (strain 5A)</name>
    <dbReference type="NCBI Taxonomy" id="563178"/>
    <lineage>
        <taxon>Bacteria</taxon>
        <taxon>Pseudomonadati</taxon>
        <taxon>Pseudomonadota</taxon>
        <taxon>Gammaproteobacteria</taxon>
        <taxon>Enterobacterales</taxon>
        <taxon>Erwiniaceae</taxon>
        <taxon>Buchnera</taxon>
    </lineage>
</organism>